<gene>
    <name type="primary">TMEM225</name>
    <name type="synonym">PMP22CD</name>
</gene>
<proteinExistence type="evidence at transcript level"/>
<feature type="chain" id="PRO_0000339350" description="Transmembrane protein 225">
    <location>
        <begin position="1"/>
        <end position="225"/>
    </location>
</feature>
<feature type="topological domain" description="Cytoplasmic" evidence="3">
    <location>
        <begin position="1"/>
        <end position="8"/>
    </location>
</feature>
<feature type="transmembrane region" description="Helical" evidence="2">
    <location>
        <begin position="9"/>
        <end position="29"/>
    </location>
</feature>
<feature type="topological domain" description="Extracellular" evidence="3">
    <location>
        <begin position="30"/>
        <end position="72"/>
    </location>
</feature>
<feature type="transmembrane region" description="Helical" evidence="2">
    <location>
        <begin position="73"/>
        <end position="93"/>
    </location>
</feature>
<feature type="topological domain" description="Cytoplasmic" evidence="3">
    <location>
        <begin position="94"/>
        <end position="99"/>
    </location>
</feature>
<feature type="transmembrane region" description="Helical" evidence="2">
    <location>
        <begin position="100"/>
        <end position="120"/>
    </location>
</feature>
<feature type="topological domain" description="Extracellular" evidence="3">
    <location>
        <begin position="121"/>
        <end position="136"/>
    </location>
</feature>
<feature type="transmembrane region" description="Helical" evidence="2">
    <location>
        <begin position="137"/>
        <end position="157"/>
    </location>
</feature>
<feature type="topological domain" description="Cytoplasmic" evidence="3">
    <location>
        <begin position="158"/>
        <end position="225"/>
    </location>
</feature>
<feature type="short sequence motif" description="RVxF" evidence="1">
    <location>
        <begin position="219"/>
        <end position="223"/>
    </location>
</feature>
<feature type="sequence variant" id="VAR_061690" description="In dbSNP:rs10893099.">
    <original>S</original>
    <variation>N</variation>
    <location>
        <position position="134"/>
    </location>
</feature>
<feature type="sequence variant" id="VAR_051260" description="In dbSNP:rs1939927.">
    <original>C</original>
    <variation>R</variation>
    <location>
        <position position="196"/>
    </location>
</feature>
<accession>Q6GV28</accession>
<sequence length="225" mass="25801">MVHVSNRSIQGMNILFSSWAVVLMVMGITLDKWVELISEDERAKMNHSPWMMCCPALWPEDDLKVVRIMMTSSLGLSFLLNLILGMKFTYLIPQNKYIQLFTTILSFFSGISLLWALILYHNKLKQGQSMHFSSYRITWIMYTAYLNVFFLSVCGVLSLLECKLSTSSCTCLNIHKSDNECKESENSIEDISLPECTAMPRSIVRAHTVNSLNKKVQTRHVTWAL</sequence>
<protein>
    <recommendedName>
        <fullName>Transmembrane protein 225</fullName>
    </recommendedName>
</protein>
<name>TM225_HUMAN</name>
<organism>
    <name type="scientific">Homo sapiens</name>
    <name type="common">Human</name>
    <dbReference type="NCBI Taxonomy" id="9606"/>
    <lineage>
        <taxon>Eukaryota</taxon>
        <taxon>Metazoa</taxon>
        <taxon>Chordata</taxon>
        <taxon>Craniata</taxon>
        <taxon>Vertebrata</taxon>
        <taxon>Euteleostomi</taxon>
        <taxon>Mammalia</taxon>
        <taxon>Eutheria</taxon>
        <taxon>Euarchontoglires</taxon>
        <taxon>Primates</taxon>
        <taxon>Haplorrhini</taxon>
        <taxon>Catarrhini</taxon>
        <taxon>Hominidae</taxon>
        <taxon>Homo</taxon>
    </lineage>
</organism>
<comment type="function">
    <text evidence="1">Probably inhibits protein phosphatase 1 (PP1) in sperm via binding to catalytic subunit PPP1CC.</text>
</comment>
<comment type="subunit">
    <text evidence="1">Interacts (via RVxF motif) with PPP1CC.</text>
</comment>
<comment type="subcellular location">
    <subcellularLocation>
        <location evidence="1">Cytoplasmic vesicle</location>
        <location evidence="1">Secretory vesicle</location>
        <location evidence="1">Acrosome membrane</location>
        <topology evidence="2">Multi-pass membrane protein</topology>
    </subcellularLocation>
</comment>
<comment type="caution">
    <text evidence="3">This protein is not related to the claudin family.</text>
</comment>
<reference key="1">
    <citation type="submission" date="2004-05" db="EMBL/GenBank/DDBJ databases">
        <authorList>
            <person name="Huang C.Q."/>
            <person name="Wu S.L."/>
            <person name="Zhou J.L."/>
        </authorList>
    </citation>
    <scope>NUCLEOTIDE SEQUENCE [MRNA]</scope>
    <scope>VARIANT ASN-134</scope>
</reference>
<reference key="2">
    <citation type="journal article" date="2006" name="Nature">
        <title>Human chromosome 11 DNA sequence and analysis including novel gene identification.</title>
        <authorList>
            <person name="Taylor T.D."/>
            <person name="Noguchi H."/>
            <person name="Totoki Y."/>
            <person name="Toyoda A."/>
            <person name="Kuroki Y."/>
            <person name="Dewar K."/>
            <person name="Lloyd C."/>
            <person name="Itoh T."/>
            <person name="Takeda T."/>
            <person name="Kim D.-W."/>
            <person name="She X."/>
            <person name="Barlow K.F."/>
            <person name="Bloom T."/>
            <person name="Bruford E."/>
            <person name="Chang J.L."/>
            <person name="Cuomo C.A."/>
            <person name="Eichler E."/>
            <person name="FitzGerald M.G."/>
            <person name="Jaffe D.B."/>
            <person name="LaButti K."/>
            <person name="Nicol R."/>
            <person name="Park H.-S."/>
            <person name="Seaman C."/>
            <person name="Sougnez C."/>
            <person name="Yang X."/>
            <person name="Zimmer A.R."/>
            <person name="Zody M.C."/>
            <person name="Birren B.W."/>
            <person name="Nusbaum C."/>
            <person name="Fujiyama A."/>
            <person name="Hattori M."/>
            <person name="Rogers J."/>
            <person name="Lander E.S."/>
            <person name="Sakaki Y."/>
        </authorList>
    </citation>
    <scope>NUCLEOTIDE SEQUENCE [LARGE SCALE GENOMIC DNA]</scope>
</reference>
<keyword id="KW-0968">Cytoplasmic vesicle</keyword>
<keyword id="KW-0472">Membrane</keyword>
<keyword id="KW-1185">Reference proteome</keyword>
<keyword id="KW-0812">Transmembrane</keyword>
<keyword id="KW-1133">Transmembrane helix</keyword>
<dbReference type="EMBL" id="AY634366">
    <property type="protein sequence ID" value="AAT47557.1"/>
    <property type="molecule type" value="mRNA"/>
</dbReference>
<dbReference type="EMBL" id="AP002407">
    <property type="status" value="NOT_ANNOTATED_CDS"/>
    <property type="molecule type" value="Genomic_DNA"/>
</dbReference>
<dbReference type="CCDS" id="CCDS31697.1"/>
<dbReference type="RefSeq" id="NP_001013765.2">
    <property type="nucleotide sequence ID" value="NM_001013743.3"/>
</dbReference>
<dbReference type="SMR" id="Q6GV28"/>
<dbReference type="BioGRID" id="130776">
    <property type="interactions" value="1"/>
</dbReference>
<dbReference type="IntAct" id="Q6GV28">
    <property type="interactions" value="1"/>
</dbReference>
<dbReference type="STRING" id="9606.ENSP00000364166"/>
<dbReference type="iPTMnet" id="Q6GV28"/>
<dbReference type="PhosphoSitePlus" id="Q6GV28"/>
<dbReference type="BioMuta" id="TMEM225"/>
<dbReference type="DMDM" id="74709356"/>
<dbReference type="PaxDb" id="9606-ENSP00000364166"/>
<dbReference type="Antibodypedia" id="18955">
    <property type="antibodies" value="2 antibodies from 2 providers"/>
</dbReference>
<dbReference type="DNASU" id="338661"/>
<dbReference type="Ensembl" id="ENST00000375026.7">
    <property type="protein sequence ID" value="ENSP00000364166.2"/>
    <property type="gene ID" value="ENSG00000204300.7"/>
</dbReference>
<dbReference type="GeneID" id="338661"/>
<dbReference type="KEGG" id="hsa:338661"/>
<dbReference type="MANE-Select" id="ENST00000375026.7">
    <property type="protein sequence ID" value="ENSP00000364166.2"/>
    <property type="RefSeq nucleotide sequence ID" value="NM_001013743.3"/>
    <property type="RefSeq protein sequence ID" value="NP_001013765.2"/>
</dbReference>
<dbReference type="UCSC" id="uc001pzi.4">
    <property type="organism name" value="human"/>
</dbReference>
<dbReference type="AGR" id="HGNC:32390"/>
<dbReference type="CTD" id="338661"/>
<dbReference type="DisGeNET" id="338661"/>
<dbReference type="GeneCards" id="TMEM225"/>
<dbReference type="HGNC" id="HGNC:32390">
    <property type="gene designation" value="TMEM225"/>
</dbReference>
<dbReference type="HPA" id="ENSG00000204300">
    <property type="expression patterns" value="Tissue enriched (testis)"/>
</dbReference>
<dbReference type="neXtProt" id="NX_Q6GV28"/>
<dbReference type="OpenTargets" id="ENSG00000204300"/>
<dbReference type="PharmGKB" id="PA164726548"/>
<dbReference type="VEuPathDB" id="HostDB:ENSG00000204300"/>
<dbReference type="eggNOG" id="ENOG502TDTU">
    <property type="taxonomic scope" value="Eukaryota"/>
</dbReference>
<dbReference type="GeneTree" id="ENSGT00390000011564"/>
<dbReference type="HOGENOM" id="CLU_074600_0_0_1"/>
<dbReference type="InParanoid" id="Q6GV28"/>
<dbReference type="OMA" id="KMNHSPW"/>
<dbReference type="OrthoDB" id="9833398at2759"/>
<dbReference type="PAN-GO" id="Q6GV28">
    <property type="GO annotations" value="0 GO annotations based on evolutionary models"/>
</dbReference>
<dbReference type="PhylomeDB" id="Q6GV28"/>
<dbReference type="TreeFam" id="TF339613"/>
<dbReference type="PathwayCommons" id="Q6GV28"/>
<dbReference type="SignaLink" id="Q6GV28"/>
<dbReference type="BioGRID-ORCS" id="338661">
    <property type="hits" value="11 hits in 1141 CRISPR screens"/>
</dbReference>
<dbReference type="GenomeRNAi" id="338661"/>
<dbReference type="Pharos" id="Q6GV28">
    <property type="development level" value="Tdark"/>
</dbReference>
<dbReference type="PRO" id="PR:Q6GV28"/>
<dbReference type="Proteomes" id="UP000005640">
    <property type="component" value="Chromosome 11"/>
</dbReference>
<dbReference type="RNAct" id="Q6GV28">
    <property type="molecule type" value="protein"/>
</dbReference>
<dbReference type="Bgee" id="ENSG00000204300">
    <property type="expression patterns" value="Expressed in sperm and 25 other cell types or tissues"/>
</dbReference>
<dbReference type="ExpressionAtlas" id="Q6GV28">
    <property type="expression patterns" value="baseline and differential"/>
</dbReference>
<dbReference type="GO" id="GO:0002080">
    <property type="term" value="C:acrosomal membrane"/>
    <property type="evidence" value="ECO:0007669"/>
    <property type="project" value="UniProtKB-SubCell"/>
</dbReference>
<dbReference type="FunFam" id="1.20.140.150:FF:000067">
    <property type="entry name" value="Transmembrane protein 225"/>
    <property type="match status" value="1"/>
</dbReference>
<dbReference type="Gene3D" id="1.20.140.150">
    <property type="match status" value="1"/>
</dbReference>
<dbReference type="InterPro" id="IPR033542">
    <property type="entry name" value="TMEM225"/>
</dbReference>
<dbReference type="PANTHER" id="PTHR36477">
    <property type="entry name" value="TRANSMEMBRANE PROTEIN 225"/>
    <property type="match status" value="1"/>
</dbReference>
<dbReference type="PANTHER" id="PTHR36477:SF1">
    <property type="entry name" value="TRANSMEMBRANE PROTEIN 225"/>
    <property type="match status" value="1"/>
</dbReference>
<dbReference type="Pfam" id="PF25452">
    <property type="entry name" value="TM225"/>
    <property type="match status" value="1"/>
</dbReference>
<evidence type="ECO:0000250" key="1">
    <source>
        <dbReference type="UniProtKB" id="Q9D9S2"/>
    </source>
</evidence>
<evidence type="ECO:0000255" key="2"/>
<evidence type="ECO:0000305" key="3"/>